<dbReference type="EMBL" id="AAFI02000047">
    <property type="protein sequence ID" value="EAL66284.1"/>
    <property type="molecule type" value="Genomic_DNA"/>
</dbReference>
<dbReference type="RefSeq" id="XP_640260.1">
    <property type="nucleotide sequence ID" value="XM_635168.1"/>
</dbReference>
<dbReference type="PaxDb" id="44689-DDB0252771"/>
<dbReference type="EnsemblProtists" id="EAL66284">
    <property type="protein sequence ID" value="EAL66284"/>
    <property type="gene ID" value="DDB_G0282325"/>
</dbReference>
<dbReference type="GeneID" id="8623519"/>
<dbReference type="KEGG" id="ddi:DDB_G0282325"/>
<dbReference type="dictyBase" id="DDB_G0282325"/>
<dbReference type="HOGENOM" id="CLU_2927419_0_0_1"/>
<dbReference type="InParanoid" id="Q54SP1"/>
<dbReference type="PRO" id="PR:Q54SP1"/>
<dbReference type="Proteomes" id="UP000002195">
    <property type="component" value="Chromosome 3"/>
</dbReference>
<proteinExistence type="predicted"/>
<keyword id="KW-1185">Reference proteome</keyword>
<name>Y2325_DICDI</name>
<reference key="1">
    <citation type="journal article" date="2005" name="Nature">
        <title>The genome of the social amoeba Dictyostelium discoideum.</title>
        <authorList>
            <person name="Eichinger L."/>
            <person name="Pachebat J.A."/>
            <person name="Gloeckner G."/>
            <person name="Rajandream M.A."/>
            <person name="Sucgang R."/>
            <person name="Berriman M."/>
            <person name="Song J."/>
            <person name="Olsen R."/>
            <person name="Szafranski K."/>
            <person name="Xu Q."/>
            <person name="Tunggal B."/>
            <person name="Kummerfeld S."/>
            <person name="Madera M."/>
            <person name="Konfortov B.A."/>
            <person name="Rivero F."/>
            <person name="Bankier A.T."/>
            <person name="Lehmann R."/>
            <person name="Hamlin N."/>
            <person name="Davies R."/>
            <person name="Gaudet P."/>
            <person name="Fey P."/>
            <person name="Pilcher K."/>
            <person name="Chen G."/>
            <person name="Saunders D."/>
            <person name="Sodergren E.J."/>
            <person name="Davis P."/>
            <person name="Kerhornou A."/>
            <person name="Nie X."/>
            <person name="Hall N."/>
            <person name="Anjard C."/>
            <person name="Hemphill L."/>
            <person name="Bason N."/>
            <person name="Farbrother P."/>
            <person name="Desany B."/>
            <person name="Just E."/>
            <person name="Morio T."/>
            <person name="Rost R."/>
            <person name="Churcher C.M."/>
            <person name="Cooper J."/>
            <person name="Haydock S."/>
            <person name="van Driessche N."/>
            <person name="Cronin A."/>
            <person name="Goodhead I."/>
            <person name="Muzny D.M."/>
            <person name="Mourier T."/>
            <person name="Pain A."/>
            <person name="Lu M."/>
            <person name="Harper D."/>
            <person name="Lindsay R."/>
            <person name="Hauser H."/>
            <person name="James K.D."/>
            <person name="Quiles M."/>
            <person name="Madan Babu M."/>
            <person name="Saito T."/>
            <person name="Buchrieser C."/>
            <person name="Wardroper A."/>
            <person name="Felder M."/>
            <person name="Thangavelu M."/>
            <person name="Johnson D."/>
            <person name="Knights A."/>
            <person name="Loulseged H."/>
            <person name="Mungall K.L."/>
            <person name="Oliver K."/>
            <person name="Price C."/>
            <person name="Quail M.A."/>
            <person name="Urushihara H."/>
            <person name="Hernandez J."/>
            <person name="Rabbinowitsch E."/>
            <person name="Steffen D."/>
            <person name="Sanders M."/>
            <person name="Ma J."/>
            <person name="Kohara Y."/>
            <person name="Sharp S."/>
            <person name="Simmonds M.N."/>
            <person name="Spiegler S."/>
            <person name="Tivey A."/>
            <person name="Sugano S."/>
            <person name="White B."/>
            <person name="Walker D."/>
            <person name="Woodward J.R."/>
            <person name="Winckler T."/>
            <person name="Tanaka Y."/>
            <person name="Shaulsky G."/>
            <person name="Schleicher M."/>
            <person name="Weinstock G.M."/>
            <person name="Rosenthal A."/>
            <person name="Cox E.C."/>
            <person name="Chisholm R.L."/>
            <person name="Gibbs R.A."/>
            <person name="Loomis W.F."/>
            <person name="Platzer M."/>
            <person name="Kay R.R."/>
            <person name="Williams J.G."/>
            <person name="Dear P.H."/>
            <person name="Noegel A.A."/>
            <person name="Barrell B.G."/>
            <person name="Kuspa A."/>
        </authorList>
    </citation>
    <scope>NUCLEOTIDE SEQUENCE [LARGE SCALE GENOMIC DNA]</scope>
    <source>
        <strain>AX4</strain>
    </source>
</reference>
<gene>
    <name type="ORF">DDB_G0282325</name>
</gene>
<feature type="chain" id="PRO_0000393463" description="Putative uncharacterized protein DDB_G0282325">
    <location>
        <begin position="1"/>
        <end position="61"/>
    </location>
</feature>
<protein>
    <recommendedName>
        <fullName>Putative uncharacterized protein DDB_G0282325</fullName>
    </recommendedName>
</protein>
<sequence length="61" mass="6564">MSILKSLTSISKISKSSNDSILNINNSNNLNSSNQNSNNEISRWTPIFTVIGRGGKNVIAA</sequence>
<accession>Q54SP1</accession>
<organism>
    <name type="scientific">Dictyostelium discoideum</name>
    <name type="common">Social amoeba</name>
    <dbReference type="NCBI Taxonomy" id="44689"/>
    <lineage>
        <taxon>Eukaryota</taxon>
        <taxon>Amoebozoa</taxon>
        <taxon>Evosea</taxon>
        <taxon>Eumycetozoa</taxon>
        <taxon>Dictyostelia</taxon>
        <taxon>Dictyosteliales</taxon>
        <taxon>Dictyosteliaceae</taxon>
        <taxon>Dictyostelium</taxon>
    </lineage>
</organism>